<gene>
    <name type="primary">ndhF</name>
</gene>
<geneLocation type="chloroplast"/>
<accession>P92248</accession>
<feature type="chain" id="PRO_0000118175" description="NAD(P)H-quinone oxidoreductase subunit 5, chloroplastic">
    <location>
        <begin position="1" status="less than"/>
        <end position="214" status="greater than"/>
    </location>
</feature>
<feature type="transmembrane region" description="Helical" evidence="2">
    <location>
        <begin position="84"/>
        <end position="104"/>
    </location>
</feature>
<feature type="transmembrane region" description="Helical" evidence="2">
    <location>
        <begin position="152"/>
        <end position="172"/>
    </location>
</feature>
<feature type="non-terminal residue">
    <location>
        <position position="1"/>
    </location>
</feature>
<feature type="non-terminal residue">
    <location>
        <position position="214"/>
    </location>
</feature>
<evidence type="ECO:0000250" key="1"/>
<evidence type="ECO:0000255" key="2"/>
<evidence type="ECO:0000305" key="3"/>
<organism>
    <name type="scientific">Brachypodium pinnatum</name>
    <name type="common">Tor grass</name>
    <name type="synonym">Bromus pinnatus</name>
    <dbReference type="NCBI Taxonomy" id="29663"/>
    <lineage>
        <taxon>Eukaryota</taxon>
        <taxon>Viridiplantae</taxon>
        <taxon>Streptophyta</taxon>
        <taxon>Embryophyta</taxon>
        <taxon>Tracheophyta</taxon>
        <taxon>Spermatophyta</taxon>
        <taxon>Magnoliopsida</taxon>
        <taxon>Liliopsida</taxon>
        <taxon>Poales</taxon>
        <taxon>Poaceae</taxon>
        <taxon>BOP clade</taxon>
        <taxon>Pooideae</taxon>
        <taxon>Stipodae</taxon>
        <taxon>Brachypodieae</taxon>
        <taxon>Brachypodium</taxon>
    </lineage>
</organism>
<keyword id="KW-0150">Chloroplast</keyword>
<keyword id="KW-0472">Membrane</keyword>
<keyword id="KW-0520">NAD</keyword>
<keyword id="KW-0521">NADP</keyword>
<keyword id="KW-0934">Plastid</keyword>
<keyword id="KW-0618">Plastoquinone</keyword>
<keyword id="KW-0874">Quinone</keyword>
<keyword id="KW-0793">Thylakoid</keyword>
<keyword id="KW-1278">Translocase</keyword>
<keyword id="KW-0812">Transmembrane</keyword>
<keyword id="KW-1133">Transmembrane helix</keyword>
<keyword id="KW-0813">Transport</keyword>
<protein>
    <recommendedName>
        <fullName>NAD(P)H-quinone oxidoreductase subunit 5, chloroplastic</fullName>
        <ecNumber>7.1.1.-</ecNumber>
    </recommendedName>
    <alternativeName>
        <fullName>NAD(P)H dehydrogenase subunit 5</fullName>
    </alternativeName>
    <alternativeName>
        <fullName>NADH-plastoquinone oxidoreductase subunit 5</fullName>
    </alternativeName>
</protein>
<reference key="1">
    <citation type="journal article" date="1997" name="Mol. Phylogenet. Evol.">
        <title>Phylogeny of Poaceae subfamily Pooideae based on chloroplast ndhF gene sequences.</title>
        <authorList>
            <person name="Catalan P."/>
            <person name="Kellogg E.A."/>
            <person name="Olmstead R.G."/>
        </authorList>
    </citation>
    <scope>NUCLEOTIDE SEQUENCE [GENOMIC DNA]</scope>
</reference>
<name>NU5C_BRAPI</name>
<proteinExistence type="inferred from homology"/>
<dbReference type="EC" id="7.1.1.-"/>
<dbReference type="EMBL" id="U71041">
    <property type="protein sequence ID" value="AAB39664.1"/>
    <property type="molecule type" value="Genomic_DNA"/>
</dbReference>
<dbReference type="PIR" id="T12652">
    <property type="entry name" value="T12652"/>
</dbReference>
<dbReference type="GO" id="GO:0009535">
    <property type="term" value="C:chloroplast thylakoid membrane"/>
    <property type="evidence" value="ECO:0007669"/>
    <property type="project" value="UniProtKB-SubCell"/>
</dbReference>
<dbReference type="GO" id="GO:0008137">
    <property type="term" value="F:NADH dehydrogenase (ubiquinone) activity"/>
    <property type="evidence" value="ECO:0007669"/>
    <property type="project" value="InterPro"/>
</dbReference>
<dbReference type="GO" id="GO:0048038">
    <property type="term" value="F:quinone binding"/>
    <property type="evidence" value="ECO:0007669"/>
    <property type="project" value="UniProtKB-KW"/>
</dbReference>
<dbReference type="GO" id="GO:0042773">
    <property type="term" value="P:ATP synthesis coupled electron transport"/>
    <property type="evidence" value="ECO:0007669"/>
    <property type="project" value="InterPro"/>
</dbReference>
<dbReference type="GO" id="GO:0015990">
    <property type="term" value="P:electron transport coupled proton transport"/>
    <property type="evidence" value="ECO:0007669"/>
    <property type="project" value="TreeGrafter"/>
</dbReference>
<dbReference type="InterPro" id="IPR002128">
    <property type="entry name" value="NADH_UbQ_OxRdtase_chlpt_su5_C"/>
</dbReference>
<dbReference type="InterPro" id="IPR003945">
    <property type="entry name" value="NU5C-like"/>
</dbReference>
<dbReference type="PANTHER" id="PTHR42829">
    <property type="entry name" value="NADH-UBIQUINONE OXIDOREDUCTASE CHAIN 5"/>
    <property type="match status" value="1"/>
</dbReference>
<dbReference type="PANTHER" id="PTHR42829:SF2">
    <property type="entry name" value="NADH-UBIQUINONE OXIDOREDUCTASE CHAIN 5"/>
    <property type="match status" value="1"/>
</dbReference>
<dbReference type="Pfam" id="PF01010">
    <property type="entry name" value="Proton_antipo_C"/>
    <property type="match status" value="1"/>
</dbReference>
<sequence>HFQNYSSTKEGSLYSISLWGNRIPKGVNKDFVLSTTKSEVSFFSQNISISKGQGNTRNRTGSFSTSFGSKNVFTYPHETGNTMLFPLLILLLFTFFIGFIGIPFDNRTMDNGIVRLTILSKWLIPSINFTQESSNFSINSYEFITNAISSVSLAILGLFIAYIFYGSAYSFFQNLDLQNSFYKGSPKKNFFYQVKKKIYSWSYNRGYIDIFYSX</sequence>
<comment type="function">
    <text evidence="1">NDH shuttles electrons from NAD(P)H:plastoquinone, via FMN and iron-sulfur (Fe-S) centers, to quinones in the photosynthetic chain and possibly in a chloroplast respiratory chain. The immediate electron acceptor for the enzyme in this species is believed to be plastoquinone. Couples the redox reaction to proton translocation, and thus conserves the redox energy in a proton gradient (By similarity).</text>
</comment>
<comment type="catalytic activity">
    <reaction>
        <text>a plastoquinone + NADH + (n+1) H(+)(in) = a plastoquinol + NAD(+) + n H(+)(out)</text>
        <dbReference type="Rhea" id="RHEA:42608"/>
        <dbReference type="Rhea" id="RHEA-COMP:9561"/>
        <dbReference type="Rhea" id="RHEA-COMP:9562"/>
        <dbReference type="ChEBI" id="CHEBI:15378"/>
        <dbReference type="ChEBI" id="CHEBI:17757"/>
        <dbReference type="ChEBI" id="CHEBI:57540"/>
        <dbReference type="ChEBI" id="CHEBI:57945"/>
        <dbReference type="ChEBI" id="CHEBI:62192"/>
    </reaction>
</comment>
<comment type="catalytic activity">
    <reaction>
        <text>a plastoquinone + NADPH + (n+1) H(+)(in) = a plastoquinol + NADP(+) + n H(+)(out)</text>
        <dbReference type="Rhea" id="RHEA:42612"/>
        <dbReference type="Rhea" id="RHEA-COMP:9561"/>
        <dbReference type="Rhea" id="RHEA-COMP:9562"/>
        <dbReference type="ChEBI" id="CHEBI:15378"/>
        <dbReference type="ChEBI" id="CHEBI:17757"/>
        <dbReference type="ChEBI" id="CHEBI:57783"/>
        <dbReference type="ChEBI" id="CHEBI:58349"/>
        <dbReference type="ChEBI" id="CHEBI:62192"/>
    </reaction>
</comment>
<comment type="subunit">
    <text evidence="1">NDH is composed of at least 16 different subunits, 5 of which are encoded in the nucleus.</text>
</comment>
<comment type="subcellular location">
    <subcellularLocation>
        <location evidence="1">Plastid</location>
        <location evidence="1">Chloroplast thylakoid membrane</location>
        <topology evidence="1">Multi-pass membrane protein</topology>
    </subcellularLocation>
</comment>
<comment type="similarity">
    <text evidence="3">Belongs to the complex I subunit 5 family.</text>
</comment>